<comment type="catalytic activity">
    <reaction>
        <text>L-glutamate + NH4(+) + ATP = L-glutamine + ADP + phosphate + H(+)</text>
        <dbReference type="Rhea" id="RHEA:16169"/>
        <dbReference type="ChEBI" id="CHEBI:15378"/>
        <dbReference type="ChEBI" id="CHEBI:28938"/>
        <dbReference type="ChEBI" id="CHEBI:29985"/>
        <dbReference type="ChEBI" id="CHEBI:30616"/>
        <dbReference type="ChEBI" id="CHEBI:43474"/>
        <dbReference type="ChEBI" id="CHEBI:58359"/>
        <dbReference type="ChEBI" id="CHEBI:456216"/>
        <dbReference type="EC" id="6.3.1.2"/>
    </reaction>
</comment>
<comment type="subunit">
    <text>Homooctamer.</text>
</comment>
<comment type="subcellular location">
    <subcellularLocation>
        <location evidence="1">Cytoplasm</location>
    </subcellularLocation>
</comment>
<comment type="similarity">
    <text evidence="2">Belongs to the glutamine synthetase family.</text>
</comment>
<accession>P11600</accession>
<proteinExistence type="evidence at transcript level"/>
<organism>
    <name type="scientific">Dunaliella salina</name>
    <name type="common">Green alga</name>
    <name type="synonym">Protococcus salinus</name>
    <dbReference type="NCBI Taxonomy" id="3046"/>
    <lineage>
        <taxon>Eukaryota</taxon>
        <taxon>Viridiplantae</taxon>
        <taxon>Chlorophyta</taxon>
        <taxon>core chlorophytes</taxon>
        <taxon>Chlorophyceae</taxon>
        <taxon>CS clade</taxon>
        <taxon>Chlamydomonadales</taxon>
        <taxon>Dunaliellaceae</taxon>
        <taxon>Dunaliella</taxon>
    </lineage>
</organism>
<evidence type="ECO:0000250" key="1"/>
<evidence type="ECO:0000255" key="2">
    <source>
        <dbReference type="PROSITE-ProRule" id="PRU01331"/>
    </source>
</evidence>
<evidence type="ECO:0000256" key="3">
    <source>
        <dbReference type="SAM" id="MobiDB-lite"/>
    </source>
</evidence>
<protein>
    <recommendedName>
        <fullName>Glutamine synthetase</fullName>
        <ecNumber>6.3.1.2</ecNumber>
    </recommendedName>
    <alternativeName>
        <fullName>Glutamate--ammonia ligase</fullName>
    </alternativeName>
</protein>
<dbReference type="EC" id="6.3.1.2"/>
<dbReference type="EMBL" id="X15280">
    <property type="protein sequence ID" value="CAA33353.1"/>
    <property type="molecule type" value="mRNA"/>
</dbReference>
<dbReference type="PIR" id="S04888">
    <property type="entry name" value="AJDHQ"/>
</dbReference>
<dbReference type="SMR" id="P11600"/>
<dbReference type="GO" id="GO:0005737">
    <property type="term" value="C:cytoplasm"/>
    <property type="evidence" value="ECO:0007669"/>
    <property type="project" value="UniProtKB-SubCell"/>
</dbReference>
<dbReference type="GO" id="GO:0005524">
    <property type="term" value="F:ATP binding"/>
    <property type="evidence" value="ECO:0007669"/>
    <property type="project" value="UniProtKB-KW"/>
</dbReference>
<dbReference type="GO" id="GO:0004356">
    <property type="term" value="F:glutamine synthetase activity"/>
    <property type="evidence" value="ECO:0007669"/>
    <property type="project" value="UniProtKB-EC"/>
</dbReference>
<dbReference type="GO" id="GO:0006542">
    <property type="term" value="P:glutamine biosynthetic process"/>
    <property type="evidence" value="ECO:0007669"/>
    <property type="project" value="TreeGrafter"/>
</dbReference>
<dbReference type="FunFam" id="3.30.590.10:FF:000004">
    <property type="entry name" value="Glutamine synthetase"/>
    <property type="match status" value="1"/>
</dbReference>
<dbReference type="Gene3D" id="3.30.590.10">
    <property type="entry name" value="Glutamine synthetase/guanido kinase, catalytic domain"/>
    <property type="match status" value="1"/>
</dbReference>
<dbReference type="InterPro" id="IPR014746">
    <property type="entry name" value="Gln_synth/guanido_kin_cat_dom"/>
</dbReference>
<dbReference type="InterPro" id="IPR008146">
    <property type="entry name" value="Gln_synth_cat_dom"/>
</dbReference>
<dbReference type="InterPro" id="IPR027303">
    <property type="entry name" value="Gln_synth_gly_rich_site"/>
</dbReference>
<dbReference type="InterPro" id="IPR050292">
    <property type="entry name" value="Glutamine_Synthetase"/>
</dbReference>
<dbReference type="PANTHER" id="PTHR20852">
    <property type="entry name" value="GLUTAMINE SYNTHETASE"/>
    <property type="match status" value="1"/>
</dbReference>
<dbReference type="PANTHER" id="PTHR20852:SF93">
    <property type="entry name" value="GLUTAMINE SYNTHETASE CYTOSOLIC ISOZYME 1-1"/>
    <property type="match status" value="1"/>
</dbReference>
<dbReference type="Pfam" id="PF00120">
    <property type="entry name" value="Gln-synt_C"/>
    <property type="match status" value="1"/>
</dbReference>
<dbReference type="SMART" id="SM01230">
    <property type="entry name" value="Gln-synt_C"/>
    <property type="match status" value="1"/>
</dbReference>
<dbReference type="SUPFAM" id="SSF55931">
    <property type="entry name" value="Glutamine synthetase/guanido kinase"/>
    <property type="match status" value="1"/>
</dbReference>
<dbReference type="PROSITE" id="PS00181">
    <property type="entry name" value="GLNA_ATP"/>
    <property type="match status" value="1"/>
</dbReference>
<dbReference type="PROSITE" id="PS51987">
    <property type="entry name" value="GS_CATALYTIC"/>
    <property type="match status" value="1"/>
</dbReference>
<sequence length="234" mass="26224">KAQEPWFGIEQEYTLLNSVTKWPLGWPKGGYPAGQGPYYCSVGAGRSIGRDIPEVHYRCCLHAGIQISGVNGEVLPSQWEYQVGPVEGIAMGDQMWMSRYLMYRVAELFNVEVTFDPKPIPGDWNGSGGHVNFSNRQPESPPAGKQSRSSAKKLGKRHRWHIAAYGEGNERRLTGKHETSSMNDFSWGVANRGCSIRVGRMVPVEKCGYYEDRRPSSNLDPYVVTRLLVETTLL</sequence>
<feature type="chain" id="PRO_0000153171" description="Glutamine synthetase">
    <location>
        <begin position="1" status="less than"/>
        <end position="234"/>
    </location>
</feature>
<feature type="domain" description="GS catalytic" evidence="2">
    <location>
        <begin position="1"/>
        <end position="234"/>
    </location>
</feature>
<feature type="region of interest" description="Disordered" evidence="3">
    <location>
        <begin position="126"/>
        <end position="157"/>
    </location>
</feature>
<feature type="non-terminal residue">
    <location>
        <position position="1"/>
    </location>
</feature>
<name>GLNA_DUNSA</name>
<reference key="1">
    <citation type="submission" date="1989-05" db="EMBL/GenBank/DDBJ databases">
        <authorList>
            <person name="Long Z."/>
            <person name="Nelson N."/>
        </authorList>
    </citation>
    <scope>NUCLEOTIDE SEQUENCE [MRNA]</scope>
</reference>
<keyword id="KW-0067">ATP-binding</keyword>
<keyword id="KW-0963">Cytoplasm</keyword>
<keyword id="KW-0436">Ligase</keyword>
<keyword id="KW-0547">Nucleotide-binding</keyword>